<reference key="1">
    <citation type="journal article" date="2005" name="J. Bacteriol.">
        <title>Insights on evolution of virulence and resistance from the complete genome analysis of an early methicillin-resistant Staphylococcus aureus strain and a biofilm-producing methicillin-resistant Staphylococcus epidermidis strain.</title>
        <authorList>
            <person name="Gill S.R."/>
            <person name="Fouts D.E."/>
            <person name="Archer G.L."/>
            <person name="Mongodin E.F."/>
            <person name="DeBoy R.T."/>
            <person name="Ravel J."/>
            <person name="Paulsen I.T."/>
            <person name="Kolonay J.F."/>
            <person name="Brinkac L.M."/>
            <person name="Beanan M.J."/>
            <person name="Dodson R.J."/>
            <person name="Daugherty S.C."/>
            <person name="Madupu R."/>
            <person name="Angiuoli S.V."/>
            <person name="Durkin A.S."/>
            <person name="Haft D.H."/>
            <person name="Vamathevan J.J."/>
            <person name="Khouri H."/>
            <person name="Utterback T.R."/>
            <person name="Lee C."/>
            <person name="Dimitrov G."/>
            <person name="Jiang L."/>
            <person name="Qin H."/>
            <person name="Weidman J."/>
            <person name="Tran K."/>
            <person name="Kang K.H."/>
            <person name="Hance I.R."/>
            <person name="Nelson K.E."/>
            <person name="Fraser C.M."/>
        </authorList>
    </citation>
    <scope>NUCLEOTIDE SEQUENCE [LARGE SCALE GENOMIC DNA]</scope>
    <source>
        <strain>COL</strain>
    </source>
</reference>
<proteinExistence type="evidence at protein level"/>
<evidence type="ECO:0000250" key="1">
    <source>
        <dbReference type="UniProtKB" id="P0AAI5"/>
    </source>
</evidence>
<evidence type="ECO:0000255" key="2">
    <source>
        <dbReference type="PROSITE-ProRule" id="PRU01348"/>
    </source>
</evidence>
<evidence type="ECO:0000305" key="3"/>
<protein>
    <recommendedName>
        <fullName>3-oxoacyl-[acyl-carrier-protein] synthase 2</fullName>
        <ecNumber evidence="1">2.3.1.179</ecNumber>
    </recommendedName>
    <alternativeName>
        <fullName>3-oxoacyl-[acyl-carrier-protein] synthase II</fullName>
    </alternativeName>
    <alternativeName>
        <fullName>Beta-ketoacyl-ACP synthase II</fullName>
        <shortName>KAS II</shortName>
    </alternativeName>
</protein>
<dbReference type="EC" id="2.3.1.179" evidence="1"/>
<dbReference type="EMBL" id="CP000046">
    <property type="protein sequence ID" value="AAW36456.1"/>
    <property type="molecule type" value="Genomic_DNA"/>
</dbReference>
<dbReference type="RefSeq" id="WP_000081240.1">
    <property type="nucleotide sequence ID" value="NZ_JBGOFO010000002.1"/>
</dbReference>
<dbReference type="PDB" id="2GQD">
    <property type="method" value="X-ray"/>
    <property type="resolution" value="2.30 A"/>
    <property type="chains" value="A=1-414"/>
</dbReference>
<dbReference type="PDBsum" id="2GQD"/>
<dbReference type="SMR" id="Q5HHA1"/>
<dbReference type="KEGG" id="sac:SACOL0988"/>
<dbReference type="HOGENOM" id="CLU_000022_69_2_9"/>
<dbReference type="UniPathway" id="UPA00094"/>
<dbReference type="Proteomes" id="UP000000530">
    <property type="component" value="Chromosome"/>
</dbReference>
<dbReference type="GO" id="GO:0005829">
    <property type="term" value="C:cytosol"/>
    <property type="evidence" value="ECO:0007669"/>
    <property type="project" value="TreeGrafter"/>
</dbReference>
<dbReference type="GO" id="GO:0004315">
    <property type="term" value="F:3-oxoacyl-[acyl-carrier-protein] synthase activity"/>
    <property type="evidence" value="ECO:0007669"/>
    <property type="project" value="UniProtKB-EC"/>
</dbReference>
<dbReference type="GO" id="GO:0006633">
    <property type="term" value="P:fatty acid biosynthetic process"/>
    <property type="evidence" value="ECO:0007669"/>
    <property type="project" value="UniProtKB-UniPathway"/>
</dbReference>
<dbReference type="CDD" id="cd00834">
    <property type="entry name" value="KAS_I_II"/>
    <property type="match status" value="1"/>
</dbReference>
<dbReference type="FunFam" id="3.40.47.10:FF:000026">
    <property type="entry name" value="3-oxoacyl-[acyl-carrier-protein] synthase 2"/>
    <property type="match status" value="1"/>
</dbReference>
<dbReference type="Gene3D" id="3.40.47.10">
    <property type="match status" value="1"/>
</dbReference>
<dbReference type="InterPro" id="IPR017568">
    <property type="entry name" value="3-oxoacyl-ACP_synth-2"/>
</dbReference>
<dbReference type="InterPro" id="IPR000794">
    <property type="entry name" value="Beta-ketoacyl_synthase"/>
</dbReference>
<dbReference type="InterPro" id="IPR018201">
    <property type="entry name" value="Ketoacyl_synth_AS"/>
</dbReference>
<dbReference type="InterPro" id="IPR014031">
    <property type="entry name" value="Ketoacyl_synth_C"/>
</dbReference>
<dbReference type="InterPro" id="IPR014030">
    <property type="entry name" value="Ketoacyl_synth_N"/>
</dbReference>
<dbReference type="InterPro" id="IPR020841">
    <property type="entry name" value="PKS_Beta-ketoAc_synthase_dom"/>
</dbReference>
<dbReference type="InterPro" id="IPR016039">
    <property type="entry name" value="Thiolase-like"/>
</dbReference>
<dbReference type="NCBIfam" id="TIGR03150">
    <property type="entry name" value="fabF"/>
    <property type="match status" value="1"/>
</dbReference>
<dbReference type="NCBIfam" id="NF004970">
    <property type="entry name" value="PRK06333.1"/>
    <property type="match status" value="1"/>
</dbReference>
<dbReference type="NCBIfam" id="NF005589">
    <property type="entry name" value="PRK07314.1"/>
    <property type="match status" value="1"/>
</dbReference>
<dbReference type="PANTHER" id="PTHR11712:SF336">
    <property type="entry name" value="3-OXOACYL-[ACYL-CARRIER-PROTEIN] SYNTHASE, MITOCHONDRIAL"/>
    <property type="match status" value="1"/>
</dbReference>
<dbReference type="PANTHER" id="PTHR11712">
    <property type="entry name" value="POLYKETIDE SYNTHASE-RELATED"/>
    <property type="match status" value="1"/>
</dbReference>
<dbReference type="Pfam" id="PF00109">
    <property type="entry name" value="ketoacyl-synt"/>
    <property type="match status" value="1"/>
</dbReference>
<dbReference type="Pfam" id="PF02801">
    <property type="entry name" value="Ketoacyl-synt_C"/>
    <property type="match status" value="1"/>
</dbReference>
<dbReference type="PIRSF" id="PIRSF000447">
    <property type="entry name" value="KAS_II"/>
    <property type="match status" value="1"/>
</dbReference>
<dbReference type="SMART" id="SM00825">
    <property type="entry name" value="PKS_KS"/>
    <property type="match status" value="1"/>
</dbReference>
<dbReference type="SUPFAM" id="SSF53901">
    <property type="entry name" value="Thiolase-like"/>
    <property type="match status" value="2"/>
</dbReference>
<dbReference type="PROSITE" id="PS00606">
    <property type="entry name" value="KS3_1"/>
    <property type="match status" value="1"/>
</dbReference>
<dbReference type="PROSITE" id="PS52004">
    <property type="entry name" value="KS3_2"/>
    <property type="match status" value="1"/>
</dbReference>
<name>FABF_STAAC</name>
<gene>
    <name type="primary">fabF</name>
    <name type="ordered locus">SACOL0988</name>
</gene>
<sequence>MSQNKRVVITGMGALSPIGNDVKTTWENALKGVNGIDKITRIDTEPYSVHLAGELKNFNIEDHIDKKEARRMDRFTQYAIVAAREAVKDAQLDINENTADRIGVWIGSGIGGMETFEIAHKQLMDKGPRRVSPFFVPMLIPDMATGQVSIDLGAKGPNGATVTACATGTNSIGEAFKIVQRGDADAMITGGTEAPITHMAIAGFSASRALSTNDDIETACRPFQEGRDGFVMGEGAGILVIESLESAQARGANIYAEIVGYGTTGDAYHITAPAPEGEGGSRAMQAAMDDAGIEPKDVQYLNAHGTSTPVGDLNEVKAIKNTFGEAAKHLKVSSTKSMTGHLLGATGGIEAIFSALSIKDSKVAPTIHAVTPDPECDLDIVPNEAQDLDITYAMSNSLGFGGHNAVLVFKKFEA</sequence>
<accession>Q5HHA1</accession>
<comment type="function">
    <text evidence="1">Involved in the type II fatty acid elongation cycle. Catalyzes the elongation of a wide range of acyl-ACP by the addition of two carbons from malonyl-ACP to an acyl acceptor. Can efficiently catalyze the conversion of palmitoleoyl-ACP (cis-hexadec-9-enoyl-ACP) to cis-vaccenoyl-ACP (cis-octadec-11-enoyl-ACP), an essential step in the thermal regulation of fatty acid composition.</text>
</comment>
<comment type="catalytic activity">
    <reaction evidence="1">
        <text>a fatty acyl-[ACP] + malonyl-[ACP] + H(+) = a 3-oxoacyl-[ACP] + holo-[ACP] + CO2</text>
        <dbReference type="Rhea" id="RHEA:22836"/>
        <dbReference type="Rhea" id="RHEA-COMP:9623"/>
        <dbReference type="Rhea" id="RHEA-COMP:9685"/>
        <dbReference type="Rhea" id="RHEA-COMP:9916"/>
        <dbReference type="Rhea" id="RHEA-COMP:14125"/>
        <dbReference type="ChEBI" id="CHEBI:15378"/>
        <dbReference type="ChEBI" id="CHEBI:16526"/>
        <dbReference type="ChEBI" id="CHEBI:64479"/>
        <dbReference type="ChEBI" id="CHEBI:78449"/>
        <dbReference type="ChEBI" id="CHEBI:78776"/>
        <dbReference type="ChEBI" id="CHEBI:138651"/>
    </reaction>
</comment>
<comment type="catalytic activity">
    <reaction evidence="1">
        <text>(9Z)-hexadecenoyl-[ACP] + malonyl-[ACP] + H(+) = 3-oxo-(11Z)-octadecenoyl-[ACP] + holo-[ACP] + CO2</text>
        <dbReference type="Rhea" id="RHEA:55040"/>
        <dbReference type="Rhea" id="RHEA-COMP:9623"/>
        <dbReference type="Rhea" id="RHEA-COMP:9685"/>
        <dbReference type="Rhea" id="RHEA-COMP:10800"/>
        <dbReference type="Rhea" id="RHEA-COMP:14074"/>
        <dbReference type="ChEBI" id="CHEBI:15378"/>
        <dbReference type="ChEBI" id="CHEBI:16526"/>
        <dbReference type="ChEBI" id="CHEBI:64479"/>
        <dbReference type="ChEBI" id="CHEBI:78449"/>
        <dbReference type="ChEBI" id="CHEBI:83989"/>
        <dbReference type="ChEBI" id="CHEBI:138538"/>
        <dbReference type="EC" id="2.3.1.179"/>
    </reaction>
</comment>
<comment type="pathway">
    <text evidence="1">Lipid metabolism; fatty acid biosynthesis.</text>
</comment>
<comment type="similarity">
    <text evidence="3">Belongs to the thiolase-like superfamily. Beta-ketoacyl-ACP synthases family.</text>
</comment>
<organism>
    <name type="scientific">Staphylococcus aureus (strain COL)</name>
    <dbReference type="NCBI Taxonomy" id="93062"/>
    <lineage>
        <taxon>Bacteria</taxon>
        <taxon>Bacillati</taxon>
        <taxon>Bacillota</taxon>
        <taxon>Bacilli</taxon>
        <taxon>Bacillales</taxon>
        <taxon>Staphylococcaceae</taxon>
        <taxon>Staphylococcus</taxon>
    </lineage>
</organism>
<feature type="chain" id="PRO_0000180320" description="3-oxoacyl-[acyl-carrier-protein] synthase 2">
    <location>
        <begin position="1"/>
        <end position="414"/>
    </location>
</feature>
<feature type="domain" description="Ketosynthase family 3 (KS3)" evidence="2">
    <location>
        <begin position="4"/>
        <end position="411"/>
    </location>
</feature>
<feature type="active site" description="For beta-ketoacyl synthase activity" evidence="2">
    <location>
        <position position="165"/>
    </location>
</feature>
<feature type="active site" description="For beta-ketoacyl synthase activity" evidence="2">
    <location>
        <position position="304"/>
    </location>
</feature>
<feature type="active site" description="For beta-ketoacyl synthase activity" evidence="2">
    <location>
        <position position="341"/>
    </location>
</feature>
<keyword id="KW-0002">3D-structure</keyword>
<keyword id="KW-0012">Acyltransferase</keyword>
<keyword id="KW-0275">Fatty acid biosynthesis</keyword>
<keyword id="KW-0276">Fatty acid metabolism</keyword>
<keyword id="KW-0444">Lipid biosynthesis</keyword>
<keyword id="KW-0443">Lipid metabolism</keyword>
<keyword id="KW-0808">Transferase</keyword>